<sequence length="115" mass="13130">MSNIIKQLEQEQMKQNVPSFRPGDTVEVKVWVVEGTKKRLQAFEGVVIAIRNRGLHSAFTVRKISNGEGVERVFQTHSPVVDSIAVKRRGAVRKAKLYYLRERTGKAARIKERLN</sequence>
<proteinExistence type="inferred from homology"/>
<accession>Q57L32</accession>
<keyword id="KW-0687">Ribonucleoprotein</keyword>
<keyword id="KW-0689">Ribosomal protein</keyword>
<comment type="function">
    <text evidence="1">This protein is located at the 30S-50S ribosomal subunit interface and may play a role in the structure and function of the aminoacyl-tRNA binding site.</text>
</comment>
<comment type="similarity">
    <text evidence="1">Belongs to the bacterial ribosomal protein bL19 family.</text>
</comment>
<evidence type="ECO:0000255" key="1">
    <source>
        <dbReference type="HAMAP-Rule" id="MF_00402"/>
    </source>
</evidence>
<evidence type="ECO:0000305" key="2"/>
<feature type="chain" id="PRO_0000226870" description="Large ribosomal subunit protein bL19">
    <location>
        <begin position="1"/>
        <end position="115"/>
    </location>
</feature>
<organism>
    <name type="scientific">Salmonella choleraesuis (strain SC-B67)</name>
    <dbReference type="NCBI Taxonomy" id="321314"/>
    <lineage>
        <taxon>Bacteria</taxon>
        <taxon>Pseudomonadati</taxon>
        <taxon>Pseudomonadota</taxon>
        <taxon>Gammaproteobacteria</taxon>
        <taxon>Enterobacterales</taxon>
        <taxon>Enterobacteriaceae</taxon>
        <taxon>Salmonella</taxon>
    </lineage>
</organism>
<gene>
    <name evidence="1" type="primary">rplS</name>
    <name type="ordered locus">SCH_2674</name>
</gene>
<dbReference type="EMBL" id="AE017220">
    <property type="protein sequence ID" value="AAX66580.1"/>
    <property type="molecule type" value="Genomic_DNA"/>
</dbReference>
<dbReference type="RefSeq" id="WP_000065257.1">
    <property type="nucleotide sequence ID" value="NC_006905.1"/>
</dbReference>
<dbReference type="SMR" id="Q57L32"/>
<dbReference type="KEGG" id="sec:SCH_2674"/>
<dbReference type="HOGENOM" id="CLU_103507_2_1_6"/>
<dbReference type="Proteomes" id="UP000000538">
    <property type="component" value="Chromosome"/>
</dbReference>
<dbReference type="GO" id="GO:0022625">
    <property type="term" value="C:cytosolic large ribosomal subunit"/>
    <property type="evidence" value="ECO:0007669"/>
    <property type="project" value="TreeGrafter"/>
</dbReference>
<dbReference type="GO" id="GO:0003735">
    <property type="term" value="F:structural constituent of ribosome"/>
    <property type="evidence" value="ECO:0007669"/>
    <property type="project" value="InterPro"/>
</dbReference>
<dbReference type="GO" id="GO:0006412">
    <property type="term" value="P:translation"/>
    <property type="evidence" value="ECO:0007669"/>
    <property type="project" value="UniProtKB-UniRule"/>
</dbReference>
<dbReference type="FunFam" id="2.30.30.790:FF:000001">
    <property type="entry name" value="50S ribosomal protein L19"/>
    <property type="match status" value="1"/>
</dbReference>
<dbReference type="Gene3D" id="2.30.30.790">
    <property type="match status" value="1"/>
</dbReference>
<dbReference type="HAMAP" id="MF_00402">
    <property type="entry name" value="Ribosomal_bL19"/>
    <property type="match status" value="1"/>
</dbReference>
<dbReference type="InterPro" id="IPR001857">
    <property type="entry name" value="Ribosomal_bL19"/>
</dbReference>
<dbReference type="InterPro" id="IPR018257">
    <property type="entry name" value="Ribosomal_bL19_CS"/>
</dbReference>
<dbReference type="InterPro" id="IPR038657">
    <property type="entry name" value="Ribosomal_bL19_sf"/>
</dbReference>
<dbReference type="InterPro" id="IPR008991">
    <property type="entry name" value="Translation_prot_SH3-like_sf"/>
</dbReference>
<dbReference type="NCBIfam" id="TIGR01024">
    <property type="entry name" value="rplS_bact"/>
    <property type="match status" value="1"/>
</dbReference>
<dbReference type="PANTHER" id="PTHR15680:SF9">
    <property type="entry name" value="LARGE RIBOSOMAL SUBUNIT PROTEIN BL19M"/>
    <property type="match status" value="1"/>
</dbReference>
<dbReference type="PANTHER" id="PTHR15680">
    <property type="entry name" value="RIBOSOMAL PROTEIN L19"/>
    <property type="match status" value="1"/>
</dbReference>
<dbReference type="Pfam" id="PF01245">
    <property type="entry name" value="Ribosomal_L19"/>
    <property type="match status" value="1"/>
</dbReference>
<dbReference type="PIRSF" id="PIRSF002191">
    <property type="entry name" value="Ribosomal_L19"/>
    <property type="match status" value="1"/>
</dbReference>
<dbReference type="PRINTS" id="PR00061">
    <property type="entry name" value="RIBOSOMALL19"/>
</dbReference>
<dbReference type="SUPFAM" id="SSF50104">
    <property type="entry name" value="Translation proteins SH3-like domain"/>
    <property type="match status" value="1"/>
</dbReference>
<dbReference type="PROSITE" id="PS01015">
    <property type="entry name" value="RIBOSOMAL_L19"/>
    <property type="match status" value="1"/>
</dbReference>
<reference key="1">
    <citation type="journal article" date="2005" name="Nucleic Acids Res.">
        <title>The genome sequence of Salmonella enterica serovar Choleraesuis, a highly invasive and resistant zoonotic pathogen.</title>
        <authorList>
            <person name="Chiu C.-H."/>
            <person name="Tang P."/>
            <person name="Chu C."/>
            <person name="Hu S."/>
            <person name="Bao Q."/>
            <person name="Yu J."/>
            <person name="Chou Y.-Y."/>
            <person name="Wang H.-S."/>
            <person name="Lee Y.-S."/>
        </authorList>
    </citation>
    <scope>NUCLEOTIDE SEQUENCE [LARGE SCALE GENOMIC DNA]</scope>
    <source>
        <strain>SC-B67</strain>
    </source>
</reference>
<name>RL19_SALCH</name>
<protein>
    <recommendedName>
        <fullName evidence="1">Large ribosomal subunit protein bL19</fullName>
    </recommendedName>
    <alternativeName>
        <fullName evidence="2">50S ribosomal protein L19</fullName>
    </alternativeName>
</protein>